<organism>
    <name type="scientific">Pseudomonas syringae pv. syringae (strain B728a)</name>
    <dbReference type="NCBI Taxonomy" id="205918"/>
    <lineage>
        <taxon>Bacteria</taxon>
        <taxon>Pseudomonadati</taxon>
        <taxon>Pseudomonadota</taxon>
        <taxon>Gammaproteobacteria</taxon>
        <taxon>Pseudomonadales</taxon>
        <taxon>Pseudomonadaceae</taxon>
        <taxon>Pseudomonas</taxon>
        <taxon>Pseudomonas syringae</taxon>
    </lineage>
</organism>
<dbReference type="EC" id="4.2.1.-" evidence="1"/>
<dbReference type="EMBL" id="CP000075">
    <property type="protein sequence ID" value="AAY35568.1"/>
    <property type="molecule type" value="Genomic_DNA"/>
</dbReference>
<dbReference type="RefSeq" id="WP_011266441.1">
    <property type="nucleotide sequence ID" value="NC_007005.1"/>
</dbReference>
<dbReference type="RefSeq" id="YP_233606.1">
    <property type="nucleotide sequence ID" value="NC_007005.1"/>
</dbReference>
<dbReference type="SMR" id="Q4ZZ54"/>
<dbReference type="STRING" id="205918.Psyr_0498"/>
<dbReference type="KEGG" id="psb:Psyr_0498"/>
<dbReference type="PATRIC" id="fig|205918.7.peg.517"/>
<dbReference type="eggNOG" id="COG4336">
    <property type="taxonomic scope" value="Bacteria"/>
</dbReference>
<dbReference type="HOGENOM" id="CLU_059759_0_0_6"/>
<dbReference type="OrthoDB" id="149585at2"/>
<dbReference type="Proteomes" id="UP000000426">
    <property type="component" value="Chromosome"/>
</dbReference>
<dbReference type="GO" id="GO:0016829">
    <property type="term" value="F:lyase activity"/>
    <property type="evidence" value="ECO:0007669"/>
    <property type="project" value="UniProtKB-KW"/>
</dbReference>
<dbReference type="FunFam" id="3.30.2040.10:FF:000001">
    <property type="entry name" value="D-glutamate cyclase, mitochondrial"/>
    <property type="match status" value="1"/>
</dbReference>
<dbReference type="Gene3D" id="3.40.1640.10">
    <property type="entry name" value="PSTPO5379-like"/>
    <property type="match status" value="1"/>
</dbReference>
<dbReference type="Gene3D" id="3.30.2040.10">
    <property type="entry name" value="PSTPO5379-like domain"/>
    <property type="match status" value="1"/>
</dbReference>
<dbReference type="HAMAP" id="MF_01830">
    <property type="entry name" value="Hydro_lyase"/>
    <property type="match status" value="1"/>
</dbReference>
<dbReference type="InterPro" id="IPR009906">
    <property type="entry name" value="D-Glu_cyclase"/>
</dbReference>
<dbReference type="InterPro" id="IPR038021">
    <property type="entry name" value="Putative_hydro-lyase"/>
</dbReference>
<dbReference type="InterPro" id="IPR016938">
    <property type="entry name" value="UPF0317"/>
</dbReference>
<dbReference type="NCBIfam" id="NF003969">
    <property type="entry name" value="PRK05463.1"/>
    <property type="match status" value="1"/>
</dbReference>
<dbReference type="PANTHER" id="PTHR32022">
    <property type="entry name" value="D-GLUTAMATE CYCLASE, MITOCHONDRIAL"/>
    <property type="match status" value="1"/>
</dbReference>
<dbReference type="PANTHER" id="PTHR32022:SF10">
    <property type="entry name" value="D-GLUTAMATE CYCLASE, MITOCHONDRIAL"/>
    <property type="match status" value="1"/>
</dbReference>
<dbReference type="Pfam" id="PF07286">
    <property type="entry name" value="D-Glu_cyclase"/>
    <property type="match status" value="1"/>
</dbReference>
<dbReference type="PIRSF" id="PIRSF029755">
    <property type="entry name" value="UCP029755"/>
    <property type="match status" value="1"/>
</dbReference>
<dbReference type="SUPFAM" id="SSF160920">
    <property type="entry name" value="PSTPO5379-like"/>
    <property type="match status" value="1"/>
</dbReference>
<reference key="1">
    <citation type="journal article" date="2005" name="Proc. Natl. Acad. Sci. U.S.A.">
        <title>Comparison of the complete genome sequences of Pseudomonas syringae pv. syringae B728a and pv. tomato DC3000.</title>
        <authorList>
            <person name="Feil H."/>
            <person name="Feil W.S."/>
            <person name="Chain P."/>
            <person name="Larimer F."/>
            <person name="Dibartolo G."/>
            <person name="Copeland A."/>
            <person name="Lykidis A."/>
            <person name="Trong S."/>
            <person name="Nolan M."/>
            <person name="Goltsman E."/>
            <person name="Thiel J."/>
            <person name="Malfatti S."/>
            <person name="Loper J.E."/>
            <person name="Lapidus A."/>
            <person name="Detter J.C."/>
            <person name="Land M."/>
            <person name="Richardson P.M."/>
            <person name="Kyrpides N.C."/>
            <person name="Ivanova N."/>
            <person name="Lindow S.E."/>
        </authorList>
    </citation>
    <scope>NUCLEOTIDE SEQUENCE [LARGE SCALE GENOMIC DNA]</scope>
    <source>
        <strain>B728a</strain>
    </source>
</reference>
<feature type="chain" id="PRO_0000379854" description="Putative hydro-lyase Psyr_0498">
    <location>
        <begin position="1"/>
        <end position="264"/>
    </location>
</feature>
<name>Y498_PSEU2</name>
<gene>
    <name type="ordered locus">Psyr_0498</name>
</gene>
<keyword id="KW-0456">Lyase</keyword>
<evidence type="ECO:0000255" key="1">
    <source>
        <dbReference type="HAMAP-Rule" id="MF_01830"/>
    </source>
</evidence>
<accession>Q4ZZ54</accession>
<proteinExistence type="inferred from homology"/>
<comment type="similarity">
    <text evidence="1">Belongs to the D-glutamate cyclase family.</text>
</comment>
<sequence length="264" mass="28975">MNSLQLAREAASAARTRYRQGFVAPTAGEAPGLTQCNMITLPREWAYDFLLFAQRNPQACPVLDVTEPGSHTTLLAEQADLRTDLPLYRVWRDGQLAEELSDVSHIWAQHTDLVSFLIGCSFTFETDLMHAGIDVRHISEGCNVPMYRSNRVCRPAGRLQGNMVVSMRPIAADRVAEAARITGRYPGVHGAPVHVGEPELLGINDLANPDFGDAVTIRPGEIPVFWACGVTPQAVVMASRVPFAISHAPGHMFITDIPDSYYHV</sequence>
<protein>
    <recommendedName>
        <fullName evidence="1">Putative hydro-lyase Psyr_0498</fullName>
        <ecNumber evidence="1">4.2.1.-</ecNumber>
    </recommendedName>
</protein>